<sequence>MEKDKKTWSGRFSEPVAQLVQRYTASIGFDYRLAEYDIQGSLAHARMLAATGIIQPADLAAIEQGLAQIREEISKGEFEWQLEQEDVHLNIERRLTALTGDAGKKLHTARSRNDQVATDIRLYLRTAIDEIIDLIHTLQYVLLDLAEQQAATIMPGFTHLQVAQPVSFGHHLLAYHEMLQRDGQRLQDCRKRVNQLPLGAAALAGTSYPVDRAMVAYELGFDDICHNSLDAVSDRDFAIEFCACAALIMMHLSRLSEELILWMNPAFGFIRLADRFCTGSSIMPQKKNPDVPELVRGKTGRINGHLVALLTLMKSQPLAYNKDNQEDKEPLFDTVDTLKDTLTIYADMLAGLHVNPEAMRQAALRGYATATDLADYLVKKGIPFRDAHEAVAQAVRFAESKACDLSELSLADLRQFSEVIEQDVFEVLTLEGSLQSRNHPGGTAPEQVREAICRARSQLPG</sequence>
<dbReference type="EC" id="4.3.2.1" evidence="1"/>
<dbReference type="EMBL" id="AL954747">
    <property type="protein sequence ID" value="CAD85765.1"/>
    <property type="molecule type" value="Genomic_DNA"/>
</dbReference>
<dbReference type="RefSeq" id="WP_011112392.1">
    <property type="nucleotide sequence ID" value="NC_004757.1"/>
</dbReference>
<dbReference type="SMR" id="Q82TN0"/>
<dbReference type="STRING" id="228410.NE1854"/>
<dbReference type="GeneID" id="87105013"/>
<dbReference type="KEGG" id="neu:NE1854"/>
<dbReference type="eggNOG" id="COG0165">
    <property type="taxonomic scope" value="Bacteria"/>
</dbReference>
<dbReference type="HOGENOM" id="CLU_027272_2_3_4"/>
<dbReference type="OrthoDB" id="9769623at2"/>
<dbReference type="PhylomeDB" id="Q82TN0"/>
<dbReference type="UniPathway" id="UPA00068">
    <property type="reaction ID" value="UER00114"/>
</dbReference>
<dbReference type="Proteomes" id="UP000001416">
    <property type="component" value="Chromosome"/>
</dbReference>
<dbReference type="GO" id="GO:0005829">
    <property type="term" value="C:cytosol"/>
    <property type="evidence" value="ECO:0007669"/>
    <property type="project" value="TreeGrafter"/>
</dbReference>
<dbReference type="GO" id="GO:0004056">
    <property type="term" value="F:argininosuccinate lyase activity"/>
    <property type="evidence" value="ECO:0007669"/>
    <property type="project" value="UniProtKB-UniRule"/>
</dbReference>
<dbReference type="GO" id="GO:0042450">
    <property type="term" value="P:arginine biosynthetic process via ornithine"/>
    <property type="evidence" value="ECO:0007669"/>
    <property type="project" value="InterPro"/>
</dbReference>
<dbReference type="GO" id="GO:0006526">
    <property type="term" value="P:L-arginine biosynthetic process"/>
    <property type="evidence" value="ECO:0007669"/>
    <property type="project" value="UniProtKB-UniRule"/>
</dbReference>
<dbReference type="CDD" id="cd01359">
    <property type="entry name" value="Argininosuccinate_lyase"/>
    <property type="match status" value="1"/>
</dbReference>
<dbReference type="FunFam" id="1.10.275.10:FF:000002">
    <property type="entry name" value="Argininosuccinate lyase"/>
    <property type="match status" value="1"/>
</dbReference>
<dbReference type="FunFam" id="1.10.40.30:FF:000001">
    <property type="entry name" value="Argininosuccinate lyase"/>
    <property type="match status" value="1"/>
</dbReference>
<dbReference type="FunFam" id="1.20.200.10:FF:000015">
    <property type="entry name" value="argininosuccinate lyase isoform X2"/>
    <property type="match status" value="1"/>
</dbReference>
<dbReference type="Gene3D" id="1.10.40.30">
    <property type="entry name" value="Fumarase/aspartase (C-terminal domain)"/>
    <property type="match status" value="1"/>
</dbReference>
<dbReference type="Gene3D" id="1.20.200.10">
    <property type="entry name" value="Fumarase/aspartase (Central domain)"/>
    <property type="match status" value="1"/>
</dbReference>
<dbReference type="Gene3D" id="1.10.275.10">
    <property type="entry name" value="Fumarase/aspartase (N-terminal domain)"/>
    <property type="match status" value="1"/>
</dbReference>
<dbReference type="HAMAP" id="MF_00006">
    <property type="entry name" value="Arg_succ_lyase"/>
    <property type="match status" value="1"/>
</dbReference>
<dbReference type="InterPro" id="IPR029419">
    <property type="entry name" value="Arg_succ_lyase_C"/>
</dbReference>
<dbReference type="InterPro" id="IPR009049">
    <property type="entry name" value="Argininosuccinate_lyase"/>
</dbReference>
<dbReference type="InterPro" id="IPR024083">
    <property type="entry name" value="Fumarase/histidase_N"/>
</dbReference>
<dbReference type="InterPro" id="IPR020557">
    <property type="entry name" value="Fumarate_lyase_CS"/>
</dbReference>
<dbReference type="InterPro" id="IPR000362">
    <property type="entry name" value="Fumarate_lyase_fam"/>
</dbReference>
<dbReference type="InterPro" id="IPR022761">
    <property type="entry name" value="Fumarate_lyase_N"/>
</dbReference>
<dbReference type="InterPro" id="IPR008948">
    <property type="entry name" value="L-Aspartase-like"/>
</dbReference>
<dbReference type="NCBIfam" id="TIGR00838">
    <property type="entry name" value="argH"/>
    <property type="match status" value="1"/>
</dbReference>
<dbReference type="PANTHER" id="PTHR43814">
    <property type="entry name" value="ARGININOSUCCINATE LYASE"/>
    <property type="match status" value="1"/>
</dbReference>
<dbReference type="PANTHER" id="PTHR43814:SF1">
    <property type="entry name" value="ARGININOSUCCINATE LYASE"/>
    <property type="match status" value="1"/>
</dbReference>
<dbReference type="Pfam" id="PF14698">
    <property type="entry name" value="ASL_C2"/>
    <property type="match status" value="1"/>
</dbReference>
<dbReference type="Pfam" id="PF00206">
    <property type="entry name" value="Lyase_1"/>
    <property type="match status" value="1"/>
</dbReference>
<dbReference type="PRINTS" id="PR00145">
    <property type="entry name" value="ARGSUCLYASE"/>
</dbReference>
<dbReference type="PRINTS" id="PR00149">
    <property type="entry name" value="FUMRATELYASE"/>
</dbReference>
<dbReference type="SUPFAM" id="SSF48557">
    <property type="entry name" value="L-aspartase-like"/>
    <property type="match status" value="1"/>
</dbReference>
<dbReference type="PROSITE" id="PS00163">
    <property type="entry name" value="FUMARATE_LYASES"/>
    <property type="match status" value="1"/>
</dbReference>
<gene>
    <name evidence="1" type="primary">argH</name>
    <name type="ordered locus">NE1854</name>
</gene>
<name>ARLY_NITEU</name>
<organism>
    <name type="scientific">Nitrosomonas europaea (strain ATCC 19718 / CIP 103999 / KCTC 2705 / NBRC 14298)</name>
    <dbReference type="NCBI Taxonomy" id="228410"/>
    <lineage>
        <taxon>Bacteria</taxon>
        <taxon>Pseudomonadati</taxon>
        <taxon>Pseudomonadota</taxon>
        <taxon>Betaproteobacteria</taxon>
        <taxon>Nitrosomonadales</taxon>
        <taxon>Nitrosomonadaceae</taxon>
        <taxon>Nitrosomonas</taxon>
    </lineage>
</organism>
<evidence type="ECO:0000255" key="1">
    <source>
        <dbReference type="HAMAP-Rule" id="MF_00006"/>
    </source>
</evidence>
<proteinExistence type="inferred from homology"/>
<accession>Q82TN0</accession>
<comment type="catalytic activity">
    <reaction evidence="1">
        <text>2-(N(omega)-L-arginino)succinate = fumarate + L-arginine</text>
        <dbReference type="Rhea" id="RHEA:24020"/>
        <dbReference type="ChEBI" id="CHEBI:29806"/>
        <dbReference type="ChEBI" id="CHEBI:32682"/>
        <dbReference type="ChEBI" id="CHEBI:57472"/>
        <dbReference type="EC" id="4.3.2.1"/>
    </reaction>
</comment>
<comment type="pathway">
    <text evidence="1">Amino-acid biosynthesis; L-arginine biosynthesis; L-arginine from L-ornithine and carbamoyl phosphate: step 3/3.</text>
</comment>
<comment type="subcellular location">
    <subcellularLocation>
        <location evidence="1">Cytoplasm</location>
    </subcellularLocation>
</comment>
<comment type="similarity">
    <text evidence="1">Belongs to the lyase 1 family. Argininosuccinate lyase subfamily.</text>
</comment>
<protein>
    <recommendedName>
        <fullName evidence="1">Argininosuccinate lyase</fullName>
        <shortName evidence="1">ASAL</shortName>
        <ecNumber evidence="1">4.3.2.1</ecNumber>
    </recommendedName>
    <alternativeName>
        <fullName evidence="1">Arginosuccinase</fullName>
    </alternativeName>
</protein>
<feature type="chain" id="PRO_0000137796" description="Argininosuccinate lyase">
    <location>
        <begin position="1"/>
        <end position="461"/>
    </location>
</feature>
<reference key="1">
    <citation type="journal article" date="2003" name="J. Bacteriol.">
        <title>Complete genome sequence of the ammonia-oxidizing bacterium and obligate chemolithoautotroph Nitrosomonas europaea.</title>
        <authorList>
            <person name="Chain P."/>
            <person name="Lamerdin J.E."/>
            <person name="Larimer F.W."/>
            <person name="Regala W."/>
            <person name="Lao V."/>
            <person name="Land M.L."/>
            <person name="Hauser L."/>
            <person name="Hooper A.B."/>
            <person name="Klotz M.G."/>
            <person name="Norton J."/>
            <person name="Sayavedra-Soto L.A."/>
            <person name="Arciero D.M."/>
            <person name="Hommes N.G."/>
            <person name="Whittaker M.M."/>
            <person name="Arp D.J."/>
        </authorList>
    </citation>
    <scope>NUCLEOTIDE SEQUENCE [LARGE SCALE GENOMIC DNA]</scope>
    <source>
        <strain>ATCC 19718 / CIP 103999 / KCTC 2705 / NBRC 14298</strain>
    </source>
</reference>
<keyword id="KW-0028">Amino-acid biosynthesis</keyword>
<keyword id="KW-0055">Arginine biosynthesis</keyword>
<keyword id="KW-0963">Cytoplasm</keyword>
<keyword id="KW-0456">Lyase</keyword>
<keyword id="KW-1185">Reference proteome</keyword>